<reference key="1">
    <citation type="journal article" date="2001" name="Plant Mol. Biol.">
        <title>The complex structures of arabinogalactan-proteins and the journey towards understanding function.</title>
        <authorList>
            <person name="Gaspar Y."/>
            <person name="Johnson K.L."/>
            <person name="McKenna J.A."/>
            <person name="Bacic A."/>
            <person name="Schultz C.J."/>
        </authorList>
    </citation>
    <scope>NUCLEOTIDE SEQUENCE [MRNA]</scope>
</reference>
<reference key="2">
    <citation type="journal article" date="1999" name="Nature">
        <title>Sequence and analysis of chromosome 2 of the plant Arabidopsis thaliana.</title>
        <authorList>
            <person name="Lin X."/>
            <person name="Kaul S."/>
            <person name="Rounsley S.D."/>
            <person name="Shea T.P."/>
            <person name="Benito M.-I."/>
            <person name="Town C.D."/>
            <person name="Fujii C.Y."/>
            <person name="Mason T.M."/>
            <person name="Bowman C.L."/>
            <person name="Barnstead M.E."/>
            <person name="Feldblyum T.V."/>
            <person name="Buell C.R."/>
            <person name="Ketchum K.A."/>
            <person name="Lee J.J."/>
            <person name="Ronning C.M."/>
            <person name="Koo H.L."/>
            <person name="Moffat K.S."/>
            <person name="Cronin L.A."/>
            <person name="Shen M."/>
            <person name="Pai G."/>
            <person name="Van Aken S."/>
            <person name="Umayam L."/>
            <person name="Tallon L.J."/>
            <person name="Gill J.E."/>
            <person name="Adams M.D."/>
            <person name="Carrera A.J."/>
            <person name="Creasy T.H."/>
            <person name="Goodman H.M."/>
            <person name="Somerville C.R."/>
            <person name="Copenhaver G.P."/>
            <person name="Preuss D."/>
            <person name="Nierman W.C."/>
            <person name="White O."/>
            <person name="Eisen J.A."/>
            <person name="Salzberg S.L."/>
            <person name="Fraser C.M."/>
            <person name="Venter J.C."/>
        </authorList>
    </citation>
    <scope>NUCLEOTIDE SEQUENCE [LARGE SCALE GENOMIC DNA]</scope>
    <source>
        <strain>cv. Columbia</strain>
    </source>
</reference>
<reference key="3">
    <citation type="journal article" date="2017" name="Plant J.">
        <title>Araport11: a complete reannotation of the Arabidopsis thaliana reference genome.</title>
        <authorList>
            <person name="Cheng C.Y."/>
            <person name="Krishnakumar V."/>
            <person name="Chan A.P."/>
            <person name="Thibaud-Nissen F."/>
            <person name="Schobel S."/>
            <person name="Town C.D."/>
        </authorList>
    </citation>
    <scope>GENOME REANNOTATION</scope>
    <source>
        <strain>cv. Columbia</strain>
    </source>
</reference>
<reference key="4">
    <citation type="journal article" date="2003" name="Plant Physiol.">
        <title>The fasciclin-like arabinogalactan proteins of Arabidopsis. A multigene family of putative cell adhesion molecules.</title>
        <authorList>
            <person name="Johnson K.L."/>
            <person name="Jones B.J."/>
            <person name="Bacic A."/>
            <person name="Schultz C.J."/>
        </authorList>
    </citation>
    <scope>GENE FAMILY ORGANIZATION</scope>
    <scope>NOMENCLATURE</scope>
</reference>
<name>FLA6_ARATH</name>
<organism>
    <name type="scientific">Arabidopsis thaliana</name>
    <name type="common">Mouse-ear cress</name>
    <dbReference type="NCBI Taxonomy" id="3702"/>
    <lineage>
        <taxon>Eukaryota</taxon>
        <taxon>Viridiplantae</taxon>
        <taxon>Streptophyta</taxon>
        <taxon>Embryophyta</taxon>
        <taxon>Tracheophyta</taxon>
        <taxon>Spermatophyta</taxon>
        <taxon>Magnoliopsida</taxon>
        <taxon>eudicotyledons</taxon>
        <taxon>Gunneridae</taxon>
        <taxon>Pentapetalae</taxon>
        <taxon>rosids</taxon>
        <taxon>malvids</taxon>
        <taxon>Brassicales</taxon>
        <taxon>Brassicaceae</taxon>
        <taxon>Camelineae</taxon>
        <taxon>Arabidopsis</taxon>
    </lineage>
</organism>
<sequence length="247" mass="26506">MSSSLFSYVVLLIFLFTIPYIQSQPTAPAPTTEKSPINLTAILEAGHQFTTLIQLLNTTQVGFQVSVQLNSSDQGMTIFAPTDNAFNKLKPGTLNSLTYQQQIQLMLYHIIPKYYSLSDLLLASNPVRTQATGQDGGVFGLNFTGQAQSNQVNVSTGVVETRINNALRQQFPLAVYVVDSVLLPEELFGTKTTPTGAPAPKSSTSSSDADSPAADDEHKSAGSSVKRTSLGIVVSFALFCCSVIYIA</sequence>
<proteinExistence type="evidence at transcript level"/>
<accession>Q9SIL7</accession>
<accession>Q9C5Q5</accession>
<feature type="signal peptide" evidence="1">
    <location>
        <begin position="1"/>
        <end position="23"/>
    </location>
</feature>
<feature type="chain" id="PRO_0000253867" description="Fasciclin-like arabinogalactan protein 6">
    <location>
        <begin position="24"/>
        <end position="222"/>
    </location>
</feature>
<feature type="propeptide" id="PRO_0000253868" description="Removed in mature form" evidence="1">
    <location>
        <begin position="223"/>
        <end position="247"/>
    </location>
</feature>
<feature type="domain" description="FAS1" evidence="2">
    <location>
        <begin position="36"/>
        <end position="182"/>
    </location>
</feature>
<feature type="region of interest" description="Disordered" evidence="3">
    <location>
        <begin position="192"/>
        <end position="221"/>
    </location>
</feature>
<feature type="compositionally biased region" description="Low complexity" evidence="3">
    <location>
        <begin position="192"/>
        <end position="212"/>
    </location>
</feature>
<feature type="lipid moiety-binding region" description="GPI-anchor amidated glycine" evidence="1">
    <location>
        <position position="222"/>
    </location>
</feature>
<feature type="glycosylation site" description="N-linked (GlcNAc...) asparagine" evidence="1">
    <location>
        <position position="38"/>
    </location>
</feature>
<feature type="glycosylation site" description="N-linked (GlcNAc...) asparagine" evidence="1">
    <location>
        <position position="57"/>
    </location>
</feature>
<feature type="glycosylation site" description="N-linked (GlcNAc...) asparagine" evidence="1">
    <location>
        <position position="70"/>
    </location>
</feature>
<feature type="glycosylation site" description="N-linked (GlcNAc...) asparagine" evidence="1">
    <location>
        <position position="142"/>
    </location>
</feature>
<feature type="glycosylation site" description="N-linked (GlcNAc...) asparagine" evidence="1">
    <location>
        <position position="153"/>
    </location>
</feature>
<gene>
    <name type="primary">FLA6</name>
    <name type="ordered locus">At2g20520</name>
    <name type="ORF">T13C7.11</name>
</gene>
<comment type="function">
    <text>May be a cell surface adhesion protein.</text>
</comment>
<comment type="subcellular location">
    <subcellularLocation>
        <location evidence="4">Cell membrane</location>
        <topology evidence="4">Lipid-anchor</topology>
        <topology evidence="4">GPI-anchor</topology>
    </subcellularLocation>
</comment>
<comment type="similarity">
    <text evidence="4">Belongs to the fasciclin-like AGP family.</text>
</comment>
<dbReference type="EMBL" id="AF333972">
    <property type="protein sequence ID" value="AAK20859.1"/>
    <property type="molecule type" value="mRNA"/>
</dbReference>
<dbReference type="EMBL" id="AC007109">
    <property type="protein sequence ID" value="AAD25652.2"/>
    <property type="molecule type" value="Genomic_DNA"/>
</dbReference>
<dbReference type="EMBL" id="CP002685">
    <property type="protein sequence ID" value="AEC07022.1"/>
    <property type="molecule type" value="Genomic_DNA"/>
</dbReference>
<dbReference type="PIR" id="C84590">
    <property type="entry name" value="C84590"/>
</dbReference>
<dbReference type="RefSeq" id="NP_565475.1">
    <property type="nucleotide sequence ID" value="NM_127612.3"/>
</dbReference>
<dbReference type="SMR" id="Q9SIL7"/>
<dbReference type="FunCoup" id="Q9SIL7">
    <property type="interactions" value="38"/>
</dbReference>
<dbReference type="STRING" id="3702.Q9SIL7"/>
<dbReference type="GlyCosmos" id="Q9SIL7">
    <property type="glycosylation" value="5 sites, No reported glycans"/>
</dbReference>
<dbReference type="GlyGen" id="Q9SIL7">
    <property type="glycosylation" value="5 sites"/>
</dbReference>
<dbReference type="PaxDb" id="3702-AT2G20520.1"/>
<dbReference type="ProteomicsDB" id="230841"/>
<dbReference type="EnsemblPlants" id="AT2G20520.1">
    <property type="protein sequence ID" value="AT2G20520.1"/>
    <property type="gene ID" value="AT2G20520"/>
</dbReference>
<dbReference type="GeneID" id="816574"/>
<dbReference type="Gramene" id="AT2G20520.1">
    <property type="protein sequence ID" value="AT2G20520.1"/>
    <property type="gene ID" value="AT2G20520"/>
</dbReference>
<dbReference type="KEGG" id="ath:AT2G20520"/>
<dbReference type="Araport" id="AT2G20520"/>
<dbReference type="TAIR" id="AT2G20520">
    <property type="gene designation" value="FLA6"/>
</dbReference>
<dbReference type="eggNOG" id="ENOG502R770">
    <property type="taxonomic scope" value="Eukaryota"/>
</dbReference>
<dbReference type="HOGENOM" id="CLU_067693_1_0_1"/>
<dbReference type="InParanoid" id="Q9SIL7"/>
<dbReference type="OMA" id="YHIIPKY"/>
<dbReference type="OrthoDB" id="286301at2759"/>
<dbReference type="PhylomeDB" id="Q9SIL7"/>
<dbReference type="PRO" id="PR:Q9SIL7"/>
<dbReference type="Proteomes" id="UP000006548">
    <property type="component" value="Chromosome 2"/>
</dbReference>
<dbReference type="ExpressionAtlas" id="Q9SIL7">
    <property type="expression patterns" value="baseline and differential"/>
</dbReference>
<dbReference type="GO" id="GO:0005886">
    <property type="term" value="C:plasma membrane"/>
    <property type="evidence" value="ECO:0007669"/>
    <property type="project" value="UniProtKB-SubCell"/>
</dbReference>
<dbReference type="GO" id="GO:0098552">
    <property type="term" value="C:side of membrane"/>
    <property type="evidence" value="ECO:0007669"/>
    <property type="project" value="UniProtKB-KW"/>
</dbReference>
<dbReference type="FunFam" id="2.30.180.10:FF:000006">
    <property type="entry name" value="Fasciclin-like arabinogalactan protein 11"/>
    <property type="match status" value="1"/>
</dbReference>
<dbReference type="Gene3D" id="2.30.180.10">
    <property type="entry name" value="FAS1 domain"/>
    <property type="match status" value="1"/>
</dbReference>
<dbReference type="InterPro" id="IPR036378">
    <property type="entry name" value="FAS1_dom_sf"/>
</dbReference>
<dbReference type="InterPro" id="IPR000782">
    <property type="entry name" value="FAS1_domain"/>
</dbReference>
<dbReference type="InterPro" id="IPR045003">
    <property type="entry name" value="FLA_A"/>
</dbReference>
<dbReference type="PANTHER" id="PTHR32077">
    <property type="entry name" value="FASCICLIN-LIKE ARABINOGALACTAN PROTEIN"/>
    <property type="match status" value="1"/>
</dbReference>
<dbReference type="PANTHER" id="PTHR32077:SF54">
    <property type="entry name" value="FASCICLIN-LIKE ARABINOGALACTAN PROTEIN 13-RELATED"/>
    <property type="match status" value="1"/>
</dbReference>
<dbReference type="Pfam" id="PF02469">
    <property type="entry name" value="Fasciclin"/>
    <property type="match status" value="1"/>
</dbReference>
<dbReference type="SMART" id="SM00554">
    <property type="entry name" value="FAS1"/>
    <property type="match status" value="1"/>
</dbReference>
<dbReference type="SUPFAM" id="SSF82153">
    <property type="entry name" value="FAS1 domain"/>
    <property type="match status" value="1"/>
</dbReference>
<dbReference type="PROSITE" id="PS50213">
    <property type="entry name" value="FAS1"/>
    <property type="match status" value="1"/>
</dbReference>
<protein>
    <recommendedName>
        <fullName>Fasciclin-like arabinogalactan protein 6</fullName>
    </recommendedName>
</protein>
<keyword id="KW-1003">Cell membrane</keyword>
<keyword id="KW-0325">Glycoprotein</keyword>
<keyword id="KW-0336">GPI-anchor</keyword>
<keyword id="KW-0449">Lipoprotein</keyword>
<keyword id="KW-0472">Membrane</keyword>
<keyword id="KW-0654">Proteoglycan</keyword>
<keyword id="KW-1185">Reference proteome</keyword>
<keyword id="KW-0732">Signal</keyword>
<evidence type="ECO:0000255" key="1"/>
<evidence type="ECO:0000255" key="2">
    <source>
        <dbReference type="PROSITE-ProRule" id="PRU00082"/>
    </source>
</evidence>
<evidence type="ECO:0000256" key="3">
    <source>
        <dbReference type="SAM" id="MobiDB-lite"/>
    </source>
</evidence>
<evidence type="ECO:0000305" key="4"/>